<reference key="1">
    <citation type="submission" date="2008-02" db="EMBL/GenBank/DDBJ databases">
        <title>Complete sequence of Pseudomonas putida W619.</title>
        <authorList>
            <person name="Copeland A."/>
            <person name="Lucas S."/>
            <person name="Lapidus A."/>
            <person name="Barry K."/>
            <person name="Detter J.C."/>
            <person name="Glavina del Rio T."/>
            <person name="Dalin E."/>
            <person name="Tice H."/>
            <person name="Pitluck S."/>
            <person name="Chain P."/>
            <person name="Malfatti S."/>
            <person name="Shin M."/>
            <person name="Vergez L."/>
            <person name="Schmutz J."/>
            <person name="Larimer F."/>
            <person name="Land M."/>
            <person name="Hauser L."/>
            <person name="Kyrpides N."/>
            <person name="Kim E."/>
            <person name="Taghavi S."/>
            <person name="Vangronsveld D."/>
            <person name="van der Lelie D."/>
            <person name="Richardson P."/>
        </authorList>
    </citation>
    <scope>NUCLEOTIDE SEQUENCE [LARGE SCALE GENOMIC DNA]</scope>
    <source>
        <strain>W619</strain>
    </source>
</reference>
<dbReference type="EC" id="2.2.1.7" evidence="1"/>
<dbReference type="EMBL" id="CP000949">
    <property type="protein sequence ID" value="ACA71084.1"/>
    <property type="molecule type" value="Genomic_DNA"/>
</dbReference>
<dbReference type="SMR" id="B1J3G4"/>
<dbReference type="STRING" id="390235.PputW619_0579"/>
<dbReference type="KEGG" id="ppw:PputW619_0579"/>
<dbReference type="eggNOG" id="COG1154">
    <property type="taxonomic scope" value="Bacteria"/>
</dbReference>
<dbReference type="HOGENOM" id="CLU_009227_1_4_6"/>
<dbReference type="OrthoDB" id="9803371at2"/>
<dbReference type="UniPathway" id="UPA00064">
    <property type="reaction ID" value="UER00091"/>
</dbReference>
<dbReference type="GO" id="GO:0005829">
    <property type="term" value="C:cytosol"/>
    <property type="evidence" value="ECO:0007669"/>
    <property type="project" value="TreeGrafter"/>
</dbReference>
<dbReference type="GO" id="GO:0008661">
    <property type="term" value="F:1-deoxy-D-xylulose-5-phosphate synthase activity"/>
    <property type="evidence" value="ECO:0007669"/>
    <property type="project" value="UniProtKB-UniRule"/>
</dbReference>
<dbReference type="GO" id="GO:0000287">
    <property type="term" value="F:magnesium ion binding"/>
    <property type="evidence" value="ECO:0007669"/>
    <property type="project" value="UniProtKB-UniRule"/>
</dbReference>
<dbReference type="GO" id="GO:0030976">
    <property type="term" value="F:thiamine pyrophosphate binding"/>
    <property type="evidence" value="ECO:0007669"/>
    <property type="project" value="UniProtKB-UniRule"/>
</dbReference>
<dbReference type="GO" id="GO:0052865">
    <property type="term" value="P:1-deoxy-D-xylulose 5-phosphate biosynthetic process"/>
    <property type="evidence" value="ECO:0007669"/>
    <property type="project" value="UniProtKB-UniPathway"/>
</dbReference>
<dbReference type="GO" id="GO:0019288">
    <property type="term" value="P:isopentenyl diphosphate biosynthetic process, methylerythritol 4-phosphate pathway"/>
    <property type="evidence" value="ECO:0007669"/>
    <property type="project" value="TreeGrafter"/>
</dbReference>
<dbReference type="GO" id="GO:0016114">
    <property type="term" value="P:terpenoid biosynthetic process"/>
    <property type="evidence" value="ECO:0007669"/>
    <property type="project" value="UniProtKB-UniRule"/>
</dbReference>
<dbReference type="GO" id="GO:0009228">
    <property type="term" value="P:thiamine biosynthetic process"/>
    <property type="evidence" value="ECO:0007669"/>
    <property type="project" value="UniProtKB-UniRule"/>
</dbReference>
<dbReference type="CDD" id="cd02007">
    <property type="entry name" value="TPP_DXS"/>
    <property type="match status" value="1"/>
</dbReference>
<dbReference type="CDD" id="cd07033">
    <property type="entry name" value="TPP_PYR_DXS_TK_like"/>
    <property type="match status" value="1"/>
</dbReference>
<dbReference type="FunFam" id="3.40.50.920:FF:000002">
    <property type="entry name" value="1-deoxy-D-xylulose-5-phosphate synthase"/>
    <property type="match status" value="1"/>
</dbReference>
<dbReference type="FunFam" id="3.40.50.970:FF:000005">
    <property type="entry name" value="1-deoxy-D-xylulose-5-phosphate synthase"/>
    <property type="match status" value="1"/>
</dbReference>
<dbReference type="Gene3D" id="3.40.50.920">
    <property type="match status" value="1"/>
</dbReference>
<dbReference type="Gene3D" id="3.40.50.970">
    <property type="match status" value="2"/>
</dbReference>
<dbReference type="HAMAP" id="MF_00315">
    <property type="entry name" value="DXP_synth"/>
    <property type="match status" value="1"/>
</dbReference>
<dbReference type="InterPro" id="IPR005477">
    <property type="entry name" value="Dxylulose-5-P_synthase"/>
</dbReference>
<dbReference type="InterPro" id="IPR029061">
    <property type="entry name" value="THDP-binding"/>
</dbReference>
<dbReference type="InterPro" id="IPR009014">
    <property type="entry name" value="Transketo_C/PFOR_II"/>
</dbReference>
<dbReference type="InterPro" id="IPR005475">
    <property type="entry name" value="Transketolase-like_Pyr-bd"/>
</dbReference>
<dbReference type="InterPro" id="IPR020826">
    <property type="entry name" value="Transketolase_BS"/>
</dbReference>
<dbReference type="InterPro" id="IPR033248">
    <property type="entry name" value="Transketolase_C"/>
</dbReference>
<dbReference type="NCBIfam" id="TIGR00204">
    <property type="entry name" value="dxs"/>
    <property type="match status" value="1"/>
</dbReference>
<dbReference type="NCBIfam" id="NF003933">
    <property type="entry name" value="PRK05444.2-2"/>
    <property type="match status" value="1"/>
</dbReference>
<dbReference type="PANTHER" id="PTHR43322">
    <property type="entry name" value="1-D-DEOXYXYLULOSE 5-PHOSPHATE SYNTHASE-RELATED"/>
    <property type="match status" value="1"/>
</dbReference>
<dbReference type="PANTHER" id="PTHR43322:SF5">
    <property type="entry name" value="1-DEOXY-D-XYLULOSE-5-PHOSPHATE SYNTHASE, CHLOROPLASTIC"/>
    <property type="match status" value="1"/>
</dbReference>
<dbReference type="Pfam" id="PF13292">
    <property type="entry name" value="DXP_synthase_N"/>
    <property type="match status" value="1"/>
</dbReference>
<dbReference type="Pfam" id="PF02779">
    <property type="entry name" value="Transket_pyr"/>
    <property type="match status" value="1"/>
</dbReference>
<dbReference type="Pfam" id="PF02780">
    <property type="entry name" value="Transketolase_C"/>
    <property type="match status" value="1"/>
</dbReference>
<dbReference type="SMART" id="SM00861">
    <property type="entry name" value="Transket_pyr"/>
    <property type="match status" value="1"/>
</dbReference>
<dbReference type="SUPFAM" id="SSF52518">
    <property type="entry name" value="Thiamin diphosphate-binding fold (THDP-binding)"/>
    <property type="match status" value="2"/>
</dbReference>
<dbReference type="SUPFAM" id="SSF52922">
    <property type="entry name" value="TK C-terminal domain-like"/>
    <property type="match status" value="1"/>
</dbReference>
<dbReference type="PROSITE" id="PS00802">
    <property type="entry name" value="TRANSKETOLASE_2"/>
    <property type="match status" value="1"/>
</dbReference>
<accession>B1J3G4</accession>
<name>DXS_PSEPW</name>
<sequence length="631" mass="68057">MPTTFQEIPRERPVTPLLDRADTPAGLRRLAEADLEHLADELRQELLYTVGQTGGHFGAGLGVIELTIALHYVFDTPDDRLVWDVGHQAYPHKILTGRRNRMLSLRQKDGIAAFPRRSESEYDTFGVGHSSTSISAALGMAIAARLQNSARKSIAVIGDGALTAGMAFEALNHAQEVNADMLVILNDNDMSISRNVGGLSNYLAKILSSRTYASMREGSKKVLSRLPGAWEIARRTEEYAKGMLVPGTLFEELGWNYIGPIDGHDLPTMIATLRNMRDLKGPQFLHVVTKKGKGFAPAEIDPIGYHAITKLEPADKPAAPKKASGPKYSAVFGQWLCDMAAADNRLVGITPAMKEGSDLVAFSERYPERYFDVAIAEQHAVTLAAGMACEGSKPVVAIYSTFLQRAYDQLIHDVAVQNLDVLFAIDRAGLVGEDGPTHAGSYDLSYLRCIPGMLVMTPSDENELRKMLSTGHLYNGPAAVRYPRGTGPNAPISGDLEPLEIGKGVIRRQGEKVALLVFGVQLAEALQVAEQINATVVDMRFVKPLDEALVLELAGSHALLVTLEENAIMGGAGAAVGEFLASQAVIKPLLHLGLPDIYVEHAKPAQMLAECGLDAAGIEASVKARMAKLGL</sequence>
<evidence type="ECO:0000255" key="1">
    <source>
        <dbReference type="HAMAP-Rule" id="MF_00315"/>
    </source>
</evidence>
<comment type="function">
    <text evidence="1">Catalyzes the acyloin condensation reaction between C atoms 2 and 3 of pyruvate and glyceraldehyde 3-phosphate to yield 1-deoxy-D-xylulose-5-phosphate (DXP).</text>
</comment>
<comment type="catalytic activity">
    <reaction evidence="1">
        <text>D-glyceraldehyde 3-phosphate + pyruvate + H(+) = 1-deoxy-D-xylulose 5-phosphate + CO2</text>
        <dbReference type="Rhea" id="RHEA:12605"/>
        <dbReference type="ChEBI" id="CHEBI:15361"/>
        <dbReference type="ChEBI" id="CHEBI:15378"/>
        <dbReference type="ChEBI" id="CHEBI:16526"/>
        <dbReference type="ChEBI" id="CHEBI:57792"/>
        <dbReference type="ChEBI" id="CHEBI:59776"/>
        <dbReference type="EC" id="2.2.1.7"/>
    </reaction>
</comment>
<comment type="cofactor">
    <cofactor evidence="1">
        <name>Mg(2+)</name>
        <dbReference type="ChEBI" id="CHEBI:18420"/>
    </cofactor>
    <text evidence="1">Binds 1 Mg(2+) ion per subunit.</text>
</comment>
<comment type="cofactor">
    <cofactor evidence="1">
        <name>thiamine diphosphate</name>
        <dbReference type="ChEBI" id="CHEBI:58937"/>
    </cofactor>
    <text evidence="1">Binds 1 thiamine pyrophosphate per subunit.</text>
</comment>
<comment type="pathway">
    <text evidence="1">Metabolic intermediate biosynthesis; 1-deoxy-D-xylulose 5-phosphate biosynthesis; 1-deoxy-D-xylulose 5-phosphate from D-glyceraldehyde 3-phosphate and pyruvate: step 1/1.</text>
</comment>
<comment type="subunit">
    <text evidence="1">Homodimer.</text>
</comment>
<comment type="similarity">
    <text evidence="1">Belongs to the transketolase family. DXPS subfamily.</text>
</comment>
<proteinExistence type="inferred from homology"/>
<gene>
    <name evidence="1" type="primary">dxs</name>
    <name type="ordered locus">PputW619_0579</name>
</gene>
<feature type="chain" id="PRO_1000115758" description="1-deoxy-D-xylulose-5-phosphate synthase">
    <location>
        <begin position="1"/>
        <end position="631"/>
    </location>
</feature>
<feature type="binding site" evidence="1">
    <location>
        <position position="87"/>
    </location>
    <ligand>
        <name>thiamine diphosphate</name>
        <dbReference type="ChEBI" id="CHEBI:58937"/>
    </ligand>
</feature>
<feature type="binding site" evidence="1">
    <location>
        <begin position="128"/>
        <end position="130"/>
    </location>
    <ligand>
        <name>thiamine diphosphate</name>
        <dbReference type="ChEBI" id="CHEBI:58937"/>
    </ligand>
</feature>
<feature type="binding site" evidence="1">
    <location>
        <position position="159"/>
    </location>
    <ligand>
        <name>Mg(2+)</name>
        <dbReference type="ChEBI" id="CHEBI:18420"/>
    </ligand>
</feature>
<feature type="binding site" evidence="1">
    <location>
        <begin position="160"/>
        <end position="161"/>
    </location>
    <ligand>
        <name>thiamine diphosphate</name>
        <dbReference type="ChEBI" id="CHEBI:58937"/>
    </ligand>
</feature>
<feature type="binding site" evidence="1">
    <location>
        <position position="188"/>
    </location>
    <ligand>
        <name>Mg(2+)</name>
        <dbReference type="ChEBI" id="CHEBI:18420"/>
    </ligand>
</feature>
<feature type="binding site" evidence="1">
    <location>
        <position position="188"/>
    </location>
    <ligand>
        <name>thiamine diphosphate</name>
        <dbReference type="ChEBI" id="CHEBI:58937"/>
    </ligand>
</feature>
<feature type="binding site" evidence="1">
    <location>
        <position position="295"/>
    </location>
    <ligand>
        <name>thiamine diphosphate</name>
        <dbReference type="ChEBI" id="CHEBI:58937"/>
    </ligand>
</feature>
<feature type="binding site" evidence="1">
    <location>
        <position position="377"/>
    </location>
    <ligand>
        <name>thiamine diphosphate</name>
        <dbReference type="ChEBI" id="CHEBI:58937"/>
    </ligand>
</feature>
<protein>
    <recommendedName>
        <fullName evidence="1">1-deoxy-D-xylulose-5-phosphate synthase</fullName>
        <ecNumber evidence="1">2.2.1.7</ecNumber>
    </recommendedName>
    <alternativeName>
        <fullName evidence="1">1-deoxyxylulose-5-phosphate synthase</fullName>
        <shortName evidence="1">DXP synthase</shortName>
        <shortName evidence="1">DXPS</shortName>
    </alternativeName>
</protein>
<organism>
    <name type="scientific">Pseudomonas putida (strain W619)</name>
    <dbReference type="NCBI Taxonomy" id="390235"/>
    <lineage>
        <taxon>Bacteria</taxon>
        <taxon>Pseudomonadati</taxon>
        <taxon>Pseudomonadota</taxon>
        <taxon>Gammaproteobacteria</taxon>
        <taxon>Pseudomonadales</taxon>
        <taxon>Pseudomonadaceae</taxon>
        <taxon>Pseudomonas</taxon>
    </lineage>
</organism>
<keyword id="KW-0414">Isoprene biosynthesis</keyword>
<keyword id="KW-0460">Magnesium</keyword>
<keyword id="KW-0479">Metal-binding</keyword>
<keyword id="KW-0784">Thiamine biosynthesis</keyword>
<keyword id="KW-0786">Thiamine pyrophosphate</keyword>
<keyword id="KW-0808">Transferase</keyword>